<evidence type="ECO:0000250" key="1"/>
<evidence type="ECO:0000250" key="2">
    <source>
        <dbReference type="UniProtKB" id="Q6ZNJ1"/>
    </source>
</evidence>
<evidence type="ECO:0000255" key="3">
    <source>
        <dbReference type="PROSITE-ProRule" id="PRU00026"/>
    </source>
</evidence>
<evidence type="ECO:0000255" key="4">
    <source>
        <dbReference type="PROSITE-ProRule" id="PRU01119"/>
    </source>
</evidence>
<evidence type="ECO:0000256" key="5">
    <source>
        <dbReference type="SAM" id="MobiDB-lite"/>
    </source>
</evidence>
<evidence type="ECO:0000303" key="6">
    <source>
    </source>
</evidence>
<evidence type="ECO:0000305" key="7"/>
<evidence type="ECO:0007744" key="8">
    <source>
    </source>
</evidence>
<name>NBEL2_MOUSE</name>
<sequence>MAASERLYELWLLYYAQKDLGYLQQWLKAFVGVFEKTISLSSLEPRRPEEAGAEVPLLPLDALHALAEQLDQDDLDQALLLLKLFIILCRNLENVEAGWGQVLVPRVLALLTVLMAELKGSSQESHGTQLENVALHALLLCEGLFDPYQTWRRQLTGEVISSKEKSKYKFPPAALPCEFGAFFQENLQDAERLPPTLLLRLIHLFGAILAGGKANGQMAVSAGSVQGLLGVVRGWGRGPAQDPQQVPLALRALVGAVHVLHASRAPPRGPELRTLLEGYFHILNADWPTSPSSSPEEALVTLRVSMLDAIPMMLACEDRPVLQATFLSNNCFEHLIRLIQNSKLYLQARAPPEGDSDLATWLLTEPDVQKVLDQDTDAIAVHVVRVLTCIMSGSPSAKEVFKERIGYQHLQEVLQSHGPPTHRLLQELLNMAVEGDHSMHPPPPIRNEQPVLVLMQWLPALPTAELRLFLAQRLWWLCDSCPASRTTCVQAGLVGYLLETLNTGTALGARCQEQLLALLQALGRVSLRPLELRRLLRPPPGLDSESSGNESQKARHAGAVIRALSGMARHRGPARALRYFDLTPSMAGIMVPPVQRWPGAGFTFHAWLCLQSSEAVPTSAPSRPLQRKQLYSFFTSSGSGFEAFFTAAGTLVVAVCTRKEYVTVNLPEVSFADSAWHCVAIVHVPGRRPFSQNLVNVFKDGHLVKTVPFRFPSLSEPFSSCCIGSAGHRTTTTTTGLPASSVSTALAHTHPSLTRSQSVPASTGLGWGPGLGTPLQEGSVSSTLAGTQDTRWGSPTSLEGELGAVAIFHEALQPSALRVLCSLGPNEPAPFKPEGELHEFGTKLLLHYSPQACKNNICLDLSPGHGLDGRLTGHRVETWDVKDVVNCVGGMGVLLPLLERVAVQPQEAEAGPCETHDLVGPELTSGRNTQGLLLPLGKSSEDRMERNAVAAFLLMLRNFLQNHTVNQESLVQCQGPAIIGALLRKVPSSAMDMNVLMSAQLLMEQAAADGGGPLLYLLYQHLLFNFHLWTLSDFAVRLGHIQYMSSMVREHRQKLRKKYGVQFLLDALRTHYSPQRERPLAADDLRTVQTSLLGLVREFLVRNFSVEDMQVVLNFLAATGDDGQVVGTLELLLTLLQGSPVQDPLAAFLLELGNLEVLLALLVRPKSTPLLTDRVCKILRRLQQNERLPERNRQRIRLHDCGLQGLVASLSEESISPQLCQGLYKLFVGTDCLNLSDLLAVVQLSLQADLSVRLDICRQLFYLIYGQPDVVRLLARQAGWQDVLTRLYVLEAATDSSPPRFLPELPISSELALSPPPTELPADSSDVFLPSESPCPDQDAFYQALSPFSTPFDLGLERASIGSGNTAGGGSSNGTVTPASQPGTPSPLDGPRPFPTAQGRHSSSLSNVLEDGSLLEPNISGDDTSNTSNPQQTPEEELCNLLTNVLFSVTWRGVEGSAEAAWRERGQVFSVLTQLGASATLVRPPDCIKRSLLEMMLESALTDIKEAPPGGLANLSQQALWLLRLLQDFLCAEGHGNQELWSEKLFEGVCNLLDRLGAWPHLANSTADLREMAQIGLRLVLGYILLEDPQLHAQAYVKLHTLLQTAVPTRREEACYVLSKLEAALSRALTTSSSETEHASTAVAASERCSWLVPLVRTLLDRAYGPLGLQWGLPSLPPTNGSPTFFEDFQAFCATAEWRHFIDKQVQPTMSKFEMDTYAKSHDLMSGFWNACYDTLMSSGQRHQRDRIQSRRAFKELVLEPAQRRARVEGLRYASVLKQQAAQHSTALLHWGALWRQLSSPCGAWALRIPPAPHWKLSSAETYSRMRLKLVPNHHFDPHLEASALRDNLGEAPMTPTEETSLPLAVTKEAKISAPPEELPEEQLGEEDLAALESLMEAAELDEKREKLVLSAECQLVTVVAVVPGLLEITTQHVYFYDGSTERVETEEGIGHDFRRPLAQLREVHLRRFNLRRSALELFFIDQSNYFLNFPHKVAASSASSPCQAPRPQLYPIPSHTQLRNQVYSLLLRLRPPTQGYLSSRSPLEMLRASGLTQKWVQREISNFEYLMQLNTIAGRTYNDLSQYPVFPWVLQDYVSPVLDLSNPAVFRDLSKPIGVVNPKHAQLVREKYESFEDPAGTIDKFHYGTHYSNAAGVMHYLIRVEPFTSLHVQLQSGRFDCSDRQFHSVAAAWQARLESPADVKELIPEFFYFPDFLENQNGFDLGCLQLTNEKVGDVVLPPWAGSPEDFIQKHRQALESEYVSTHLHEWIDLIFGYKQRGPAAEEALNVFYYCTYEGAVDLDHVADERERKALEGIISNFGQTPCQLLKEPHPPRLSAEEAANRLARLDTNSPSIFQNLNQLKAFFAEVVSEAVPLVLALVPHRQSHSFITQSSSDMLVTVSASGLLGTHTWLPYDRNINNYFTFSKDPTMGSPKVQKLLSGPWVSDSGVSAQALAVAPDGKLLFSGGHWDGSLRVTSLPRGRLLNQLSRHLDIVTCLALDTCGIYLISGSRDTTCMVWRLLQQSGLSAGLAPKPVQVLYGHVAAVSCVAISTELDMAVSGSEDGTVIIHTVRRGQFVAALRPPGATLPGPISHLALGAEGQIVVQSSACERPGAQVTYSLHLYSVNGRLRASVTLTEQPTALTVAEDFVLLGTAQCSLHILHLNKLRPAVPPLPMKVPVHSVSVTKERSHVLVGLEDGKLIVVGAGQPSEVRSSQFARRLWRSSRRISQVSSGETEYNPGEAR</sequence>
<protein>
    <recommendedName>
        <fullName>Neurobeachin-like protein 2</fullName>
    </recommendedName>
</protein>
<dbReference type="EMBL" id="AC132103">
    <property type="status" value="NOT_ANNOTATED_CDS"/>
    <property type="molecule type" value="Genomic_DNA"/>
</dbReference>
<dbReference type="EMBL" id="AK129158">
    <property type="protein sequence ID" value="BAC97968.2"/>
    <property type="molecule type" value="mRNA"/>
</dbReference>
<dbReference type="SMR" id="Q6ZQA0"/>
<dbReference type="FunCoup" id="Q6ZQA0">
    <property type="interactions" value="1461"/>
</dbReference>
<dbReference type="STRING" id="10090.ENSMUSP00000128586"/>
<dbReference type="GlyGen" id="Q6ZQA0">
    <property type="glycosylation" value="3 sites, 1 N-linked glycan (1 site)"/>
</dbReference>
<dbReference type="iPTMnet" id="Q6ZQA0"/>
<dbReference type="PhosphoSitePlus" id="Q6ZQA0"/>
<dbReference type="SwissPalm" id="Q6ZQA0"/>
<dbReference type="jPOST" id="Q6ZQA0"/>
<dbReference type="PaxDb" id="10090-ENSMUSP00000128586"/>
<dbReference type="ProteomicsDB" id="252786">
    <molecule id="Q6ZQA0-1"/>
</dbReference>
<dbReference type="ProteomicsDB" id="252787">
    <molecule id="Q6ZQA0-2"/>
</dbReference>
<dbReference type="Antibodypedia" id="62670">
    <property type="antibodies" value="36 antibodies from 12 providers"/>
</dbReference>
<dbReference type="Ensembl" id="ENSMUST00000133191.8">
    <molecule id="Q6ZQA0-2"/>
    <property type="protein sequence ID" value="ENSMUSP00000121373.2"/>
    <property type="gene ID" value="ENSMUSG00000056724.16"/>
</dbReference>
<dbReference type="AGR" id="MGI:2448554"/>
<dbReference type="MGI" id="MGI:2448554">
    <property type="gene designation" value="Nbeal2"/>
</dbReference>
<dbReference type="VEuPathDB" id="HostDB:ENSMUSG00000056724"/>
<dbReference type="eggNOG" id="KOG1787">
    <property type="taxonomic scope" value="Eukaryota"/>
</dbReference>
<dbReference type="GeneTree" id="ENSGT00940000158454"/>
<dbReference type="InParanoid" id="Q6ZQA0"/>
<dbReference type="Reactome" id="R-MMU-6798695">
    <property type="pathway name" value="Neutrophil degranulation"/>
</dbReference>
<dbReference type="ChiTaRS" id="Nbeal2">
    <property type="organism name" value="mouse"/>
</dbReference>
<dbReference type="PRO" id="PR:Q6ZQA0"/>
<dbReference type="Proteomes" id="UP000000589">
    <property type="component" value="Chromosome 9"/>
</dbReference>
<dbReference type="RNAct" id="Q6ZQA0">
    <property type="molecule type" value="protein"/>
</dbReference>
<dbReference type="Bgee" id="ENSMUSG00000056724">
    <property type="expression patterns" value="Expressed in granulocyte and 125 other cell types or tissues"/>
</dbReference>
<dbReference type="ExpressionAtlas" id="Q6ZQA0">
    <property type="expression patterns" value="baseline and differential"/>
</dbReference>
<dbReference type="GO" id="GO:0005783">
    <property type="term" value="C:endoplasmic reticulum"/>
    <property type="evidence" value="ECO:0000250"/>
    <property type="project" value="UniProtKB"/>
</dbReference>
<dbReference type="GO" id="GO:0007596">
    <property type="term" value="P:blood coagulation"/>
    <property type="evidence" value="ECO:0000315"/>
    <property type="project" value="MGI"/>
</dbReference>
<dbReference type="GO" id="GO:0035855">
    <property type="term" value="P:megakaryocyte development"/>
    <property type="evidence" value="ECO:0000315"/>
    <property type="project" value="MGI"/>
</dbReference>
<dbReference type="GO" id="GO:0070889">
    <property type="term" value="P:platelet alpha granule organization"/>
    <property type="evidence" value="ECO:0000315"/>
    <property type="project" value="MGI"/>
</dbReference>
<dbReference type="GO" id="GO:0030220">
    <property type="term" value="P:platelet formation"/>
    <property type="evidence" value="ECO:0000250"/>
    <property type="project" value="UniProtKB"/>
</dbReference>
<dbReference type="GO" id="GO:0042060">
    <property type="term" value="P:wound healing"/>
    <property type="evidence" value="ECO:0000315"/>
    <property type="project" value="MGI"/>
</dbReference>
<dbReference type="CDD" id="cd06071">
    <property type="entry name" value="Beach"/>
    <property type="match status" value="1"/>
</dbReference>
<dbReference type="CDD" id="cd01201">
    <property type="entry name" value="PH_BEACH"/>
    <property type="match status" value="1"/>
</dbReference>
<dbReference type="FunFam" id="1.10.1540.10:FF:000001">
    <property type="entry name" value="neurobeachin isoform X1"/>
    <property type="match status" value="1"/>
</dbReference>
<dbReference type="FunFam" id="2.130.10.10:FF:001375">
    <property type="entry name" value="Neurobeachin-like protein 2"/>
    <property type="match status" value="1"/>
</dbReference>
<dbReference type="Gene3D" id="1.10.1540.10">
    <property type="entry name" value="BEACH domain"/>
    <property type="match status" value="1"/>
</dbReference>
<dbReference type="Gene3D" id="1.25.10.10">
    <property type="entry name" value="Leucine-rich Repeat Variant"/>
    <property type="match status" value="1"/>
</dbReference>
<dbReference type="Gene3D" id="2.30.29.30">
    <property type="entry name" value="Pleckstrin-homology domain (PH domain)/Phosphotyrosine-binding domain (PTB)"/>
    <property type="match status" value="1"/>
</dbReference>
<dbReference type="Gene3D" id="2.130.10.10">
    <property type="entry name" value="YVTN repeat-like/Quinoprotein amine dehydrogenase"/>
    <property type="match status" value="1"/>
</dbReference>
<dbReference type="InterPro" id="IPR011989">
    <property type="entry name" value="ARM-like"/>
</dbReference>
<dbReference type="InterPro" id="IPR016024">
    <property type="entry name" value="ARM-type_fold"/>
</dbReference>
<dbReference type="InterPro" id="IPR000409">
    <property type="entry name" value="BEACH_dom"/>
</dbReference>
<dbReference type="InterPro" id="IPR036372">
    <property type="entry name" value="BEACH_dom_sf"/>
</dbReference>
<dbReference type="InterPro" id="IPR050865">
    <property type="entry name" value="BEACH_Domain"/>
</dbReference>
<dbReference type="InterPro" id="IPR013320">
    <property type="entry name" value="ConA-like_dom_sf"/>
</dbReference>
<dbReference type="InterPro" id="IPR046851">
    <property type="entry name" value="NBCH_WD40"/>
</dbReference>
<dbReference type="InterPro" id="IPR031570">
    <property type="entry name" value="NBEA/BDCP_DUF4704"/>
</dbReference>
<dbReference type="InterPro" id="IPR046852">
    <property type="entry name" value="Neurobeachin_a-sol"/>
</dbReference>
<dbReference type="InterPro" id="IPR023362">
    <property type="entry name" value="PH-BEACH_dom"/>
</dbReference>
<dbReference type="InterPro" id="IPR011993">
    <property type="entry name" value="PH-like_dom_sf"/>
</dbReference>
<dbReference type="InterPro" id="IPR015943">
    <property type="entry name" value="WD40/YVTN_repeat-like_dom_sf"/>
</dbReference>
<dbReference type="InterPro" id="IPR036322">
    <property type="entry name" value="WD40_repeat_dom_sf"/>
</dbReference>
<dbReference type="InterPro" id="IPR001680">
    <property type="entry name" value="WD40_rpt"/>
</dbReference>
<dbReference type="PANTHER" id="PTHR13743">
    <property type="entry name" value="BEIGE/BEACH-RELATED"/>
    <property type="match status" value="1"/>
</dbReference>
<dbReference type="PANTHER" id="PTHR13743:SF111">
    <property type="entry name" value="NEUROBEACHIN-LIKE PROTEIN 2"/>
    <property type="match status" value="1"/>
</dbReference>
<dbReference type="Pfam" id="PF02138">
    <property type="entry name" value="Beach"/>
    <property type="match status" value="1"/>
</dbReference>
<dbReference type="Pfam" id="PF15787">
    <property type="entry name" value="DUF4704"/>
    <property type="match status" value="1"/>
</dbReference>
<dbReference type="Pfam" id="PF16057">
    <property type="entry name" value="DUF4800"/>
    <property type="match status" value="1"/>
</dbReference>
<dbReference type="Pfam" id="PF20426">
    <property type="entry name" value="NBCH_WD40"/>
    <property type="match status" value="1"/>
</dbReference>
<dbReference type="Pfam" id="PF20425">
    <property type="entry name" value="Neurobeachin"/>
    <property type="match status" value="1"/>
</dbReference>
<dbReference type="Pfam" id="PF14844">
    <property type="entry name" value="PH_BEACH"/>
    <property type="match status" value="1"/>
</dbReference>
<dbReference type="SMART" id="SM01026">
    <property type="entry name" value="Beach"/>
    <property type="match status" value="1"/>
</dbReference>
<dbReference type="SMART" id="SM00320">
    <property type="entry name" value="WD40"/>
    <property type="match status" value="3"/>
</dbReference>
<dbReference type="SUPFAM" id="SSF48371">
    <property type="entry name" value="ARM repeat"/>
    <property type="match status" value="1"/>
</dbReference>
<dbReference type="SUPFAM" id="SSF81837">
    <property type="entry name" value="BEACH domain"/>
    <property type="match status" value="1"/>
</dbReference>
<dbReference type="SUPFAM" id="SSF49899">
    <property type="entry name" value="Concanavalin A-like lectins/glucanases"/>
    <property type="match status" value="1"/>
</dbReference>
<dbReference type="SUPFAM" id="SSF50729">
    <property type="entry name" value="PH domain-like"/>
    <property type="match status" value="1"/>
</dbReference>
<dbReference type="SUPFAM" id="SSF50978">
    <property type="entry name" value="WD40 repeat-like"/>
    <property type="match status" value="1"/>
</dbReference>
<dbReference type="PROSITE" id="PS50197">
    <property type="entry name" value="BEACH"/>
    <property type="match status" value="1"/>
</dbReference>
<dbReference type="PROSITE" id="PS51783">
    <property type="entry name" value="PH_BEACH"/>
    <property type="match status" value="1"/>
</dbReference>
<dbReference type="PROSITE" id="PS50082">
    <property type="entry name" value="WD_REPEATS_2"/>
    <property type="match status" value="2"/>
</dbReference>
<dbReference type="PROSITE" id="PS50294">
    <property type="entry name" value="WD_REPEATS_REGION"/>
    <property type="match status" value="1"/>
</dbReference>
<accession>Q6ZQA0</accession>
<proteinExistence type="evidence at protein level"/>
<feature type="chain" id="PRO_0000333255" description="Neurobeachin-like protein 2">
    <location>
        <begin position="1"/>
        <end position="2742"/>
    </location>
</feature>
<feature type="domain" description="BEACH-type PH" evidence="4">
    <location>
        <begin position="1903"/>
        <end position="2028"/>
    </location>
</feature>
<feature type="domain" description="BEACH" evidence="3">
    <location>
        <begin position="2041"/>
        <end position="2333"/>
    </location>
</feature>
<feature type="repeat" description="WD 1">
    <location>
        <begin position="2374"/>
        <end position="2412"/>
    </location>
</feature>
<feature type="repeat" description="WD 2">
    <location>
        <begin position="2436"/>
        <end position="2479"/>
    </location>
</feature>
<feature type="repeat" description="WD 3">
    <location>
        <begin position="2482"/>
        <end position="2519"/>
    </location>
</feature>
<feature type="repeat" description="WD 4">
    <location>
        <begin position="2532"/>
        <end position="2570"/>
    </location>
</feature>
<feature type="repeat" description="WD 5">
    <location>
        <begin position="2577"/>
        <end position="2619"/>
    </location>
</feature>
<feature type="repeat" description="WD 6">
    <location>
        <begin position="2627"/>
        <end position="2662"/>
    </location>
</feature>
<feature type="repeat" description="WD 7">
    <location>
        <begin position="2670"/>
        <end position="2705"/>
    </location>
</feature>
<feature type="region of interest" description="Disordered" evidence="5">
    <location>
        <begin position="1312"/>
        <end position="1333"/>
    </location>
</feature>
<feature type="region of interest" description="Disordered" evidence="5">
    <location>
        <begin position="1356"/>
        <end position="1434"/>
    </location>
</feature>
<feature type="compositionally biased region" description="Pro residues" evidence="5">
    <location>
        <begin position="1384"/>
        <end position="1394"/>
    </location>
</feature>
<feature type="compositionally biased region" description="Polar residues" evidence="5">
    <location>
        <begin position="1421"/>
        <end position="1433"/>
    </location>
</feature>
<feature type="modified residue" description="Phosphothreonine" evidence="2">
    <location>
        <position position="1855"/>
    </location>
</feature>
<feature type="modified residue" description="Phosphoserine" evidence="8">
    <location>
        <position position="2727"/>
    </location>
</feature>
<feature type="modified residue" description="Phosphoserine" evidence="2">
    <location>
        <position position="2730"/>
    </location>
</feature>
<feature type="splice variant" id="VSP_033508" description="In isoform 2." evidence="6">
    <original>M</original>
    <variation>ME</variation>
    <location>
        <position position="1896"/>
    </location>
</feature>
<keyword id="KW-0025">Alternative splicing</keyword>
<keyword id="KW-0256">Endoplasmic reticulum</keyword>
<keyword id="KW-0597">Phosphoprotein</keyword>
<keyword id="KW-1185">Reference proteome</keyword>
<keyword id="KW-0677">Repeat</keyword>
<keyword id="KW-0853">WD repeat</keyword>
<gene>
    <name type="primary">Nbeal2</name>
    <name type="synonym">Kiaa0540</name>
</gene>
<comment type="function">
    <text evidence="1">Probably involved in thrombopoiesis. Plays a role in the development or secretion of alpha-granules, that contain several growth factors important for platelet biogenesis (By similarity).</text>
</comment>
<comment type="subcellular location">
    <subcellularLocation>
        <location evidence="1">Endoplasmic reticulum</location>
    </subcellularLocation>
</comment>
<comment type="alternative products">
    <event type="alternative splicing"/>
    <isoform>
        <id>Q6ZQA0-1</id>
        <name>1</name>
        <sequence type="displayed"/>
    </isoform>
    <isoform>
        <id>Q6ZQA0-2</id>
        <name>2</name>
        <sequence type="described" ref="VSP_033508"/>
    </isoform>
</comment>
<comment type="similarity">
    <text evidence="7">Belongs to the WD repeat neurobeachin family.</text>
</comment>
<organism>
    <name type="scientific">Mus musculus</name>
    <name type="common">Mouse</name>
    <dbReference type="NCBI Taxonomy" id="10090"/>
    <lineage>
        <taxon>Eukaryota</taxon>
        <taxon>Metazoa</taxon>
        <taxon>Chordata</taxon>
        <taxon>Craniata</taxon>
        <taxon>Vertebrata</taxon>
        <taxon>Euteleostomi</taxon>
        <taxon>Mammalia</taxon>
        <taxon>Eutheria</taxon>
        <taxon>Euarchontoglires</taxon>
        <taxon>Glires</taxon>
        <taxon>Rodentia</taxon>
        <taxon>Myomorpha</taxon>
        <taxon>Muroidea</taxon>
        <taxon>Muridae</taxon>
        <taxon>Murinae</taxon>
        <taxon>Mus</taxon>
        <taxon>Mus</taxon>
    </lineage>
</organism>
<reference key="1">
    <citation type="journal article" date="2009" name="PLoS Biol.">
        <title>Lineage-specific biology revealed by a finished genome assembly of the mouse.</title>
        <authorList>
            <person name="Church D.M."/>
            <person name="Goodstadt L."/>
            <person name="Hillier L.W."/>
            <person name="Zody M.C."/>
            <person name="Goldstein S."/>
            <person name="She X."/>
            <person name="Bult C.J."/>
            <person name="Agarwala R."/>
            <person name="Cherry J.L."/>
            <person name="DiCuccio M."/>
            <person name="Hlavina W."/>
            <person name="Kapustin Y."/>
            <person name="Meric P."/>
            <person name="Maglott D."/>
            <person name="Birtle Z."/>
            <person name="Marques A.C."/>
            <person name="Graves T."/>
            <person name="Zhou S."/>
            <person name="Teague B."/>
            <person name="Potamousis K."/>
            <person name="Churas C."/>
            <person name="Place M."/>
            <person name="Herschleb J."/>
            <person name="Runnheim R."/>
            <person name="Forrest D."/>
            <person name="Amos-Landgraf J."/>
            <person name="Schwartz D.C."/>
            <person name="Cheng Z."/>
            <person name="Lindblad-Toh K."/>
            <person name="Eichler E.E."/>
            <person name="Ponting C.P."/>
        </authorList>
    </citation>
    <scope>NUCLEOTIDE SEQUENCE [LARGE SCALE GENOMIC DNA]</scope>
    <source>
        <strain>C57BL/6J</strain>
    </source>
</reference>
<reference key="2">
    <citation type="journal article" date="2003" name="DNA Res.">
        <title>Prediction of the coding sequences of mouse homologues of KIAA gene: III. The complete nucleotide sequences of 500 mouse KIAA-homologous cDNAs identified by screening of terminal sequences of cDNA clones randomly sampled from size-fractionated libraries.</title>
        <authorList>
            <person name="Okazaki N."/>
            <person name="Kikuno R."/>
            <person name="Ohara R."/>
            <person name="Inamoto S."/>
            <person name="Koseki H."/>
            <person name="Hiraoka S."/>
            <person name="Saga Y."/>
            <person name="Nagase T."/>
            <person name="Ohara O."/>
            <person name="Koga H."/>
        </authorList>
    </citation>
    <scope>NUCLEOTIDE SEQUENCE [LARGE SCALE MRNA] OF 1362-2742 (ISOFORM 2)</scope>
    <source>
        <tissue>Brain</tissue>
    </source>
</reference>
<reference key="3">
    <citation type="submission" date="2003-12" db="EMBL/GenBank/DDBJ databases">
        <authorList>
            <person name="Okazaki N."/>
            <person name="Kikuno R."/>
            <person name="Nagase T."/>
            <person name="Ohara O."/>
            <person name="Koga H."/>
        </authorList>
    </citation>
    <scope>SEQUENCE REVISION</scope>
    <source>
        <tissue>Brain</tissue>
    </source>
</reference>
<reference key="4">
    <citation type="journal article" date="2010" name="Cell">
        <title>A tissue-specific atlas of mouse protein phosphorylation and expression.</title>
        <authorList>
            <person name="Huttlin E.L."/>
            <person name="Jedrychowski M.P."/>
            <person name="Elias J.E."/>
            <person name="Goswami T."/>
            <person name="Rad R."/>
            <person name="Beausoleil S.A."/>
            <person name="Villen J."/>
            <person name="Haas W."/>
            <person name="Sowa M.E."/>
            <person name="Gygi S.P."/>
        </authorList>
    </citation>
    <scope>PHOSPHORYLATION [LARGE SCALE ANALYSIS] AT SER-2727</scope>
    <scope>IDENTIFICATION BY MASS SPECTROMETRY [LARGE SCALE ANALYSIS]</scope>
    <source>
        <tissue>Heart</tissue>
        <tissue>Kidney</tissue>
        <tissue>Liver</tissue>
        <tissue>Lung</tissue>
        <tissue>Spleen</tissue>
    </source>
</reference>